<sequence>MAARSLWAVQRLQRLLASGAMSESRGWLHPFSTATQRTAGEDCSSEDPPDGLGPSLAEQALRLKAVKLEKEVQDLTLRYQRAVADCENIRRRTQRCVEDAKIFGIQSFCKDLVEVADILEKTAKCCSEGAEPEDHRRTLEKVFQGLSLLEARLKSVFTKHGLEKMTPIGDKYDPHEHELICHMPAGVGVQPGTVALVRQDGYKLHGRTIRLAQVEVAVESQRRL</sequence>
<keyword id="KW-0007">Acetylation</keyword>
<keyword id="KW-0143">Chaperone</keyword>
<keyword id="KW-0496">Mitochondrion</keyword>
<keyword id="KW-1185">Reference proteome</keyword>
<keyword id="KW-0809">Transit peptide</keyword>
<dbReference type="EMBL" id="AK003011">
    <property type="protein sequence ID" value="BAB22511.1"/>
    <property type="molecule type" value="mRNA"/>
</dbReference>
<dbReference type="EMBL" id="AK012634">
    <property type="protein sequence ID" value="BAB28371.1"/>
    <property type="molecule type" value="mRNA"/>
</dbReference>
<dbReference type="EMBL" id="AK082983">
    <property type="protein sequence ID" value="BAC38720.1"/>
    <property type="molecule type" value="mRNA"/>
</dbReference>
<dbReference type="EMBL" id="AK145493">
    <property type="protein sequence ID" value="BAE26470.1"/>
    <property type="molecule type" value="mRNA"/>
</dbReference>
<dbReference type="EMBL" id="AF041060">
    <property type="protein sequence ID" value="AAC31364.1"/>
    <property type="molecule type" value="mRNA"/>
</dbReference>
<dbReference type="CCDS" id="CCDS29288.1"/>
<dbReference type="RefSeq" id="NP_067271.1">
    <property type="nucleotide sequence ID" value="NM_021296.2"/>
</dbReference>
<dbReference type="SMR" id="O88396"/>
<dbReference type="BioGRID" id="201546">
    <property type="interactions" value="4"/>
</dbReference>
<dbReference type="FunCoup" id="O88396">
    <property type="interactions" value="780"/>
</dbReference>
<dbReference type="STRING" id="10090.ENSMUSP00000053440"/>
<dbReference type="GlyGen" id="O88396">
    <property type="glycosylation" value="1 site, 1 O-linked glycan (1 site)"/>
</dbReference>
<dbReference type="PhosphoSitePlus" id="O88396"/>
<dbReference type="SwissPalm" id="O88396"/>
<dbReference type="PaxDb" id="10090-ENSMUSP00000053440"/>
<dbReference type="PeptideAtlas" id="O88396"/>
<dbReference type="ProteomicsDB" id="271337"/>
<dbReference type="Pumba" id="O88396"/>
<dbReference type="Antibodypedia" id="3037">
    <property type="antibodies" value="117 antibodies from 20 providers"/>
</dbReference>
<dbReference type="DNASU" id="17714"/>
<dbReference type="Ensembl" id="ENSMUST00000062991.9">
    <property type="protein sequence ID" value="ENSMUSP00000053440.8"/>
    <property type="gene ID" value="ENSMUSG00000024580.9"/>
</dbReference>
<dbReference type="GeneID" id="17714"/>
<dbReference type="KEGG" id="mmu:17714"/>
<dbReference type="UCSC" id="uc008fco.1">
    <property type="organism name" value="mouse"/>
</dbReference>
<dbReference type="AGR" id="MGI:1334416"/>
<dbReference type="CTD" id="134266"/>
<dbReference type="MGI" id="MGI:1334416">
    <property type="gene designation" value="Grpel2"/>
</dbReference>
<dbReference type="VEuPathDB" id="HostDB:ENSMUSG00000024580"/>
<dbReference type="eggNOG" id="KOG3003">
    <property type="taxonomic scope" value="Eukaryota"/>
</dbReference>
<dbReference type="GeneTree" id="ENSGT00390000005589"/>
<dbReference type="HOGENOM" id="CLU_057217_0_1_1"/>
<dbReference type="InParanoid" id="O88396"/>
<dbReference type="OMA" id="QHELICH"/>
<dbReference type="OrthoDB" id="201635at2759"/>
<dbReference type="PhylomeDB" id="O88396"/>
<dbReference type="TreeFam" id="TF105284"/>
<dbReference type="BioGRID-ORCS" id="17714">
    <property type="hits" value="2 hits in 77 CRISPR screens"/>
</dbReference>
<dbReference type="ChiTaRS" id="Grpel2">
    <property type="organism name" value="mouse"/>
</dbReference>
<dbReference type="PRO" id="PR:O88396"/>
<dbReference type="Proteomes" id="UP000000589">
    <property type="component" value="Chromosome 18"/>
</dbReference>
<dbReference type="RNAct" id="O88396">
    <property type="molecule type" value="protein"/>
</dbReference>
<dbReference type="Bgee" id="ENSMUSG00000024580">
    <property type="expression patterns" value="Expressed in ear vesicle and 258 other cell types or tissues"/>
</dbReference>
<dbReference type="ExpressionAtlas" id="O88396">
    <property type="expression patterns" value="baseline and differential"/>
</dbReference>
<dbReference type="GO" id="GO:0005743">
    <property type="term" value="C:mitochondrial inner membrane"/>
    <property type="evidence" value="ECO:0007005"/>
    <property type="project" value="MGI"/>
</dbReference>
<dbReference type="GO" id="GO:0005759">
    <property type="term" value="C:mitochondrial matrix"/>
    <property type="evidence" value="ECO:0007669"/>
    <property type="project" value="UniProtKB-SubCell"/>
</dbReference>
<dbReference type="GO" id="GO:0005739">
    <property type="term" value="C:mitochondrion"/>
    <property type="evidence" value="ECO:0007005"/>
    <property type="project" value="MGI"/>
</dbReference>
<dbReference type="GO" id="GO:0000774">
    <property type="term" value="F:adenyl-nucleotide exchange factor activity"/>
    <property type="evidence" value="ECO:0007669"/>
    <property type="project" value="InterPro"/>
</dbReference>
<dbReference type="GO" id="GO:0042803">
    <property type="term" value="F:protein homodimerization activity"/>
    <property type="evidence" value="ECO:0007669"/>
    <property type="project" value="InterPro"/>
</dbReference>
<dbReference type="GO" id="GO:0051087">
    <property type="term" value="F:protein-folding chaperone binding"/>
    <property type="evidence" value="ECO:0007669"/>
    <property type="project" value="InterPro"/>
</dbReference>
<dbReference type="GO" id="GO:0051082">
    <property type="term" value="F:unfolded protein binding"/>
    <property type="evidence" value="ECO:0000314"/>
    <property type="project" value="MGI"/>
</dbReference>
<dbReference type="GO" id="GO:0006457">
    <property type="term" value="P:protein folding"/>
    <property type="evidence" value="ECO:0007669"/>
    <property type="project" value="InterPro"/>
</dbReference>
<dbReference type="CDD" id="cd00446">
    <property type="entry name" value="GrpE"/>
    <property type="match status" value="1"/>
</dbReference>
<dbReference type="FunFam" id="2.30.22.10:FF:000003">
    <property type="entry name" value="GrpE protein homolog"/>
    <property type="match status" value="1"/>
</dbReference>
<dbReference type="FunFam" id="3.90.20.20:FF:000004">
    <property type="entry name" value="GrpE protein homolog"/>
    <property type="match status" value="1"/>
</dbReference>
<dbReference type="Gene3D" id="3.90.20.20">
    <property type="match status" value="1"/>
</dbReference>
<dbReference type="Gene3D" id="2.30.22.10">
    <property type="entry name" value="Head domain of nucleotide exchange factor GrpE"/>
    <property type="match status" value="1"/>
</dbReference>
<dbReference type="HAMAP" id="MF_01151">
    <property type="entry name" value="GrpE"/>
    <property type="match status" value="1"/>
</dbReference>
<dbReference type="InterPro" id="IPR000740">
    <property type="entry name" value="GrpE"/>
</dbReference>
<dbReference type="InterPro" id="IPR013805">
    <property type="entry name" value="GrpE_coiled_coil"/>
</dbReference>
<dbReference type="InterPro" id="IPR009012">
    <property type="entry name" value="GrpE_head"/>
</dbReference>
<dbReference type="PANTHER" id="PTHR21237">
    <property type="entry name" value="GRPE PROTEIN"/>
    <property type="match status" value="1"/>
</dbReference>
<dbReference type="PANTHER" id="PTHR21237:SF10">
    <property type="entry name" value="GRPE PROTEIN HOMOLOG 2, MITOCHONDRIAL"/>
    <property type="match status" value="1"/>
</dbReference>
<dbReference type="Pfam" id="PF01025">
    <property type="entry name" value="GrpE"/>
    <property type="match status" value="1"/>
</dbReference>
<dbReference type="PRINTS" id="PR00773">
    <property type="entry name" value="GRPEPROTEIN"/>
</dbReference>
<dbReference type="SUPFAM" id="SSF58014">
    <property type="entry name" value="Coiled-coil domain of nucleotide exchange factor GrpE"/>
    <property type="match status" value="1"/>
</dbReference>
<dbReference type="SUPFAM" id="SSF51064">
    <property type="entry name" value="Head domain of nucleotide exchange factor GrpE"/>
    <property type="match status" value="1"/>
</dbReference>
<dbReference type="PROSITE" id="PS01071">
    <property type="entry name" value="GRPE"/>
    <property type="match status" value="1"/>
</dbReference>
<reference key="1">
    <citation type="journal article" date="2005" name="Science">
        <title>The transcriptional landscape of the mammalian genome.</title>
        <authorList>
            <person name="Carninci P."/>
            <person name="Kasukawa T."/>
            <person name="Katayama S."/>
            <person name="Gough J."/>
            <person name="Frith M.C."/>
            <person name="Maeda N."/>
            <person name="Oyama R."/>
            <person name="Ravasi T."/>
            <person name="Lenhard B."/>
            <person name="Wells C."/>
            <person name="Kodzius R."/>
            <person name="Shimokawa K."/>
            <person name="Bajic V.B."/>
            <person name="Brenner S.E."/>
            <person name="Batalov S."/>
            <person name="Forrest A.R."/>
            <person name="Zavolan M."/>
            <person name="Davis M.J."/>
            <person name="Wilming L.G."/>
            <person name="Aidinis V."/>
            <person name="Allen J.E."/>
            <person name="Ambesi-Impiombato A."/>
            <person name="Apweiler R."/>
            <person name="Aturaliya R.N."/>
            <person name="Bailey T.L."/>
            <person name="Bansal M."/>
            <person name="Baxter L."/>
            <person name="Beisel K.W."/>
            <person name="Bersano T."/>
            <person name="Bono H."/>
            <person name="Chalk A.M."/>
            <person name="Chiu K.P."/>
            <person name="Choudhary V."/>
            <person name="Christoffels A."/>
            <person name="Clutterbuck D.R."/>
            <person name="Crowe M.L."/>
            <person name="Dalla E."/>
            <person name="Dalrymple B.P."/>
            <person name="de Bono B."/>
            <person name="Della Gatta G."/>
            <person name="di Bernardo D."/>
            <person name="Down T."/>
            <person name="Engstrom P."/>
            <person name="Fagiolini M."/>
            <person name="Faulkner G."/>
            <person name="Fletcher C.F."/>
            <person name="Fukushima T."/>
            <person name="Furuno M."/>
            <person name="Futaki S."/>
            <person name="Gariboldi M."/>
            <person name="Georgii-Hemming P."/>
            <person name="Gingeras T.R."/>
            <person name="Gojobori T."/>
            <person name="Green R.E."/>
            <person name="Gustincich S."/>
            <person name="Harbers M."/>
            <person name="Hayashi Y."/>
            <person name="Hensch T.K."/>
            <person name="Hirokawa N."/>
            <person name="Hill D."/>
            <person name="Huminiecki L."/>
            <person name="Iacono M."/>
            <person name="Ikeo K."/>
            <person name="Iwama A."/>
            <person name="Ishikawa T."/>
            <person name="Jakt M."/>
            <person name="Kanapin A."/>
            <person name="Katoh M."/>
            <person name="Kawasawa Y."/>
            <person name="Kelso J."/>
            <person name="Kitamura H."/>
            <person name="Kitano H."/>
            <person name="Kollias G."/>
            <person name="Krishnan S.P."/>
            <person name="Kruger A."/>
            <person name="Kummerfeld S.K."/>
            <person name="Kurochkin I.V."/>
            <person name="Lareau L.F."/>
            <person name="Lazarevic D."/>
            <person name="Lipovich L."/>
            <person name="Liu J."/>
            <person name="Liuni S."/>
            <person name="McWilliam S."/>
            <person name="Madan Babu M."/>
            <person name="Madera M."/>
            <person name="Marchionni L."/>
            <person name="Matsuda H."/>
            <person name="Matsuzawa S."/>
            <person name="Miki H."/>
            <person name="Mignone F."/>
            <person name="Miyake S."/>
            <person name="Morris K."/>
            <person name="Mottagui-Tabar S."/>
            <person name="Mulder N."/>
            <person name="Nakano N."/>
            <person name="Nakauchi H."/>
            <person name="Ng P."/>
            <person name="Nilsson R."/>
            <person name="Nishiguchi S."/>
            <person name="Nishikawa S."/>
            <person name="Nori F."/>
            <person name="Ohara O."/>
            <person name="Okazaki Y."/>
            <person name="Orlando V."/>
            <person name="Pang K.C."/>
            <person name="Pavan W.J."/>
            <person name="Pavesi G."/>
            <person name="Pesole G."/>
            <person name="Petrovsky N."/>
            <person name="Piazza S."/>
            <person name="Reed J."/>
            <person name="Reid J.F."/>
            <person name="Ring B.Z."/>
            <person name="Ringwald M."/>
            <person name="Rost B."/>
            <person name="Ruan Y."/>
            <person name="Salzberg S.L."/>
            <person name="Sandelin A."/>
            <person name="Schneider C."/>
            <person name="Schoenbach C."/>
            <person name="Sekiguchi K."/>
            <person name="Semple C.A."/>
            <person name="Seno S."/>
            <person name="Sessa L."/>
            <person name="Sheng Y."/>
            <person name="Shibata Y."/>
            <person name="Shimada H."/>
            <person name="Shimada K."/>
            <person name="Silva D."/>
            <person name="Sinclair B."/>
            <person name="Sperling S."/>
            <person name="Stupka E."/>
            <person name="Sugiura K."/>
            <person name="Sultana R."/>
            <person name="Takenaka Y."/>
            <person name="Taki K."/>
            <person name="Tammoja K."/>
            <person name="Tan S.L."/>
            <person name="Tang S."/>
            <person name="Taylor M.S."/>
            <person name="Tegner J."/>
            <person name="Teichmann S.A."/>
            <person name="Ueda H.R."/>
            <person name="van Nimwegen E."/>
            <person name="Verardo R."/>
            <person name="Wei C.L."/>
            <person name="Yagi K."/>
            <person name="Yamanishi H."/>
            <person name="Zabarovsky E."/>
            <person name="Zhu S."/>
            <person name="Zimmer A."/>
            <person name="Hide W."/>
            <person name="Bult C."/>
            <person name="Grimmond S.M."/>
            <person name="Teasdale R.D."/>
            <person name="Liu E.T."/>
            <person name="Brusic V."/>
            <person name="Quackenbush J."/>
            <person name="Wahlestedt C."/>
            <person name="Mattick J.S."/>
            <person name="Hume D.A."/>
            <person name="Kai C."/>
            <person name="Sasaki D."/>
            <person name="Tomaru Y."/>
            <person name="Fukuda S."/>
            <person name="Kanamori-Katayama M."/>
            <person name="Suzuki M."/>
            <person name="Aoki J."/>
            <person name="Arakawa T."/>
            <person name="Iida J."/>
            <person name="Imamura K."/>
            <person name="Itoh M."/>
            <person name="Kato T."/>
            <person name="Kawaji H."/>
            <person name="Kawagashira N."/>
            <person name="Kawashima T."/>
            <person name="Kojima M."/>
            <person name="Kondo S."/>
            <person name="Konno H."/>
            <person name="Nakano K."/>
            <person name="Ninomiya N."/>
            <person name="Nishio T."/>
            <person name="Okada M."/>
            <person name="Plessy C."/>
            <person name="Shibata K."/>
            <person name="Shiraki T."/>
            <person name="Suzuki S."/>
            <person name="Tagami M."/>
            <person name="Waki K."/>
            <person name="Watahiki A."/>
            <person name="Okamura-Oho Y."/>
            <person name="Suzuki H."/>
            <person name="Kawai J."/>
            <person name="Hayashizaki Y."/>
        </authorList>
    </citation>
    <scope>NUCLEOTIDE SEQUENCE [LARGE SCALE MRNA]</scope>
    <source>
        <strain>C57BL/6J</strain>
        <tissue>Brain</tissue>
        <tissue>Embryo</tissue>
        <tissue>Spinal cord</tissue>
    </source>
</reference>
<reference key="2">
    <citation type="journal article" date="1998" name="J. Biol. Chem.">
        <title>Evidence for the existence of distinct mammalian cytosolic, microsomal, and two mitochondrial GrpE-like proteins, the co-chaperones of specific Hsp70 members.</title>
        <authorList>
            <person name="Naylor D.J."/>
            <person name="Stines A.P."/>
            <person name="Hoogenraad N.J."/>
            <person name="Hoej P.B."/>
        </authorList>
    </citation>
    <scope>NUCLEOTIDE SEQUENCE [MRNA] OF 2-224</scope>
</reference>
<comment type="function">
    <text>Essential component of the PAM complex, a complex required for the translocation of transit peptide-containing proteins from the inner membrane into the mitochondrial matrix in an ATP-dependent manner. Seems to control the nucleotide-dependent binding of mitochondrial HSP70 to substrate proteins. Stimulates ATPase activity of mt-HSP70. May also serve to modulate the interconversion of oligomeric (inactive) and monomeric (active) forms of mt-HSP70.</text>
</comment>
<comment type="subunit">
    <text evidence="1">Probable component of the PAM complex at least composed of a mitochondrial HSP70 protein, GRPEL1 or GRPEL2, TIMM44, TIMM16/PAM16 and TIMM14/DNAJC19.</text>
</comment>
<comment type="subcellular location">
    <subcellularLocation>
        <location>Mitochondrion matrix</location>
    </subcellularLocation>
</comment>
<comment type="tissue specificity">
    <text>Ubiquitous.</text>
</comment>
<comment type="similarity">
    <text evidence="3">Belongs to the GrpE family.</text>
</comment>
<feature type="transit peptide" description="Mitochondrion" evidence="1">
    <location>
        <begin position="1"/>
        <end position="31"/>
    </location>
</feature>
<feature type="chain" id="PRO_0000013053" description="GrpE protein homolog 2, mitochondrial">
    <location>
        <begin position="32"/>
        <end position="224"/>
    </location>
</feature>
<feature type="modified residue" description="N6-acetyllysine" evidence="2">
    <location>
        <position position="141"/>
    </location>
</feature>
<gene>
    <name type="primary">Grpel2</name>
    <name type="synonym">Mt-grpel2</name>
</gene>
<protein>
    <recommendedName>
        <fullName>GrpE protein homolog 2, mitochondrial</fullName>
    </recommendedName>
    <alternativeName>
        <fullName>Mt-GrpE#2</fullName>
    </alternativeName>
</protein>
<accession>O88396</accession>
<accession>Q3ULH8</accession>
<accession>Q9CQ97</accession>
<proteinExistence type="evidence at transcript level"/>
<evidence type="ECO:0000250" key="1"/>
<evidence type="ECO:0000250" key="2">
    <source>
        <dbReference type="UniProtKB" id="Q8TAA5"/>
    </source>
</evidence>
<evidence type="ECO:0000305" key="3"/>
<organism>
    <name type="scientific">Mus musculus</name>
    <name type="common">Mouse</name>
    <dbReference type="NCBI Taxonomy" id="10090"/>
    <lineage>
        <taxon>Eukaryota</taxon>
        <taxon>Metazoa</taxon>
        <taxon>Chordata</taxon>
        <taxon>Craniata</taxon>
        <taxon>Vertebrata</taxon>
        <taxon>Euteleostomi</taxon>
        <taxon>Mammalia</taxon>
        <taxon>Eutheria</taxon>
        <taxon>Euarchontoglires</taxon>
        <taxon>Glires</taxon>
        <taxon>Rodentia</taxon>
        <taxon>Myomorpha</taxon>
        <taxon>Muroidea</taxon>
        <taxon>Muridae</taxon>
        <taxon>Murinae</taxon>
        <taxon>Mus</taxon>
        <taxon>Mus</taxon>
    </lineage>
</organism>
<name>GRPE2_MOUSE</name>